<feature type="chain" id="PRO_1000215414" description="Pyrimidine/purine nucleoside phosphorylase">
    <location>
        <begin position="1"/>
        <end position="103"/>
    </location>
</feature>
<protein>
    <recommendedName>
        <fullName evidence="1">Pyrimidine/purine nucleoside phosphorylase</fullName>
        <ecNumber evidence="1">2.4.2.1</ecNumber>
        <ecNumber evidence="1">2.4.2.2</ecNumber>
    </recommendedName>
    <alternativeName>
        <fullName evidence="1">Adenosine phosphorylase</fullName>
    </alternativeName>
    <alternativeName>
        <fullName evidence="1">Cytidine phosphorylase</fullName>
    </alternativeName>
    <alternativeName>
        <fullName evidence="1">Guanosine phosphorylase</fullName>
    </alternativeName>
    <alternativeName>
        <fullName evidence="1">Inosine phosphorylase</fullName>
    </alternativeName>
    <alternativeName>
        <fullName evidence="1">Thymidine phosphorylase</fullName>
    </alternativeName>
    <alternativeName>
        <fullName evidence="1">Uridine phosphorylase</fullName>
    </alternativeName>
    <alternativeName>
        <fullName evidence="1">Xanthosine phosphorylase</fullName>
    </alternativeName>
</protein>
<organism>
    <name type="scientific">Geobacter sp. (strain M21)</name>
    <dbReference type="NCBI Taxonomy" id="443144"/>
    <lineage>
        <taxon>Bacteria</taxon>
        <taxon>Pseudomonadati</taxon>
        <taxon>Thermodesulfobacteriota</taxon>
        <taxon>Desulfuromonadia</taxon>
        <taxon>Geobacterales</taxon>
        <taxon>Geobacteraceae</taxon>
        <taxon>Geobacter</taxon>
    </lineage>
</organism>
<name>PPNP_GEOSM</name>
<proteinExistence type="inferred from homology"/>
<sequence length="103" mass="11061">MSEFNNVSVVKEANIYFDGKVTSRTVIFPDGSRKTLGVMLPGEYTFNTGSAELMEILSGEMTVVLPGSPDPVAIKGGEAFEVPENASFKVNVTAVSDYICSFL</sequence>
<dbReference type="EC" id="2.4.2.1" evidence="1"/>
<dbReference type="EC" id="2.4.2.2" evidence="1"/>
<dbReference type="EMBL" id="CP001661">
    <property type="protein sequence ID" value="ACT17248.1"/>
    <property type="molecule type" value="Genomic_DNA"/>
</dbReference>
<dbReference type="SMR" id="C6E375"/>
<dbReference type="STRING" id="443144.GM21_1187"/>
<dbReference type="KEGG" id="gem:GM21_1187"/>
<dbReference type="eggNOG" id="COG3123">
    <property type="taxonomic scope" value="Bacteria"/>
</dbReference>
<dbReference type="HOGENOM" id="CLU_157874_1_0_7"/>
<dbReference type="OrthoDB" id="9793848at2"/>
<dbReference type="GO" id="GO:0005829">
    <property type="term" value="C:cytosol"/>
    <property type="evidence" value="ECO:0007669"/>
    <property type="project" value="TreeGrafter"/>
</dbReference>
<dbReference type="GO" id="GO:0047975">
    <property type="term" value="F:guanosine phosphorylase activity"/>
    <property type="evidence" value="ECO:0007669"/>
    <property type="project" value="UniProtKB-EC"/>
</dbReference>
<dbReference type="GO" id="GO:0004731">
    <property type="term" value="F:purine-nucleoside phosphorylase activity"/>
    <property type="evidence" value="ECO:0007669"/>
    <property type="project" value="UniProtKB-UniRule"/>
</dbReference>
<dbReference type="GO" id="GO:0009032">
    <property type="term" value="F:thymidine phosphorylase activity"/>
    <property type="evidence" value="ECO:0007669"/>
    <property type="project" value="UniProtKB-EC"/>
</dbReference>
<dbReference type="GO" id="GO:0004850">
    <property type="term" value="F:uridine phosphorylase activity"/>
    <property type="evidence" value="ECO:0007669"/>
    <property type="project" value="UniProtKB-EC"/>
</dbReference>
<dbReference type="CDD" id="cd20296">
    <property type="entry name" value="cupin_PpnP-like"/>
    <property type="match status" value="1"/>
</dbReference>
<dbReference type="Gene3D" id="2.60.120.10">
    <property type="entry name" value="Jelly Rolls"/>
    <property type="match status" value="1"/>
</dbReference>
<dbReference type="HAMAP" id="MF_01537">
    <property type="entry name" value="Nucleos_phosphorylase_PpnP"/>
    <property type="match status" value="1"/>
</dbReference>
<dbReference type="InterPro" id="IPR009664">
    <property type="entry name" value="Ppnp"/>
</dbReference>
<dbReference type="InterPro" id="IPR014710">
    <property type="entry name" value="RmlC-like_jellyroll"/>
</dbReference>
<dbReference type="InterPro" id="IPR011051">
    <property type="entry name" value="RmlC_Cupin_sf"/>
</dbReference>
<dbReference type="PANTHER" id="PTHR36540">
    <property type="entry name" value="PYRIMIDINE/PURINE NUCLEOSIDE PHOSPHORYLASE"/>
    <property type="match status" value="1"/>
</dbReference>
<dbReference type="PANTHER" id="PTHR36540:SF1">
    <property type="entry name" value="PYRIMIDINE_PURINE NUCLEOSIDE PHOSPHORYLASE"/>
    <property type="match status" value="1"/>
</dbReference>
<dbReference type="Pfam" id="PF06865">
    <property type="entry name" value="Ppnp"/>
    <property type="match status" value="1"/>
</dbReference>
<dbReference type="SUPFAM" id="SSF51182">
    <property type="entry name" value="RmlC-like cupins"/>
    <property type="match status" value="1"/>
</dbReference>
<keyword id="KW-0328">Glycosyltransferase</keyword>
<keyword id="KW-0808">Transferase</keyword>
<gene>
    <name evidence="1" type="primary">ppnP</name>
    <name type="ordered locus">GM21_1187</name>
</gene>
<accession>C6E375</accession>
<comment type="function">
    <text evidence="1">Catalyzes the phosphorolysis of diverse nucleosides, yielding D-ribose 1-phosphate and the respective free bases. Can use uridine, adenosine, guanosine, cytidine, thymidine, inosine and xanthosine as substrates. Also catalyzes the reverse reactions.</text>
</comment>
<comment type="catalytic activity">
    <reaction evidence="1">
        <text>a purine D-ribonucleoside + phosphate = a purine nucleobase + alpha-D-ribose 1-phosphate</text>
        <dbReference type="Rhea" id="RHEA:19805"/>
        <dbReference type="ChEBI" id="CHEBI:26386"/>
        <dbReference type="ChEBI" id="CHEBI:43474"/>
        <dbReference type="ChEBI" id="CHEBI:57720"/>
        <dbReference type="ChEBI" id="CHEBI:142355"/>
        <dbReference type="EC" id="2.4.2.1"/>
    </reaction>
</comment>
<comment type="catalytic activity">
    <reaction evidence="1">
        <text>adenosine + phosphate = alpha-D-ribose 1-phosphate + adenine</text>
        <dbReference type="Rhea" id="RHEA:27642"/>
        <dbReference type="ChEBI" id="CHEBI:16335"/>
        <dbReference type="ChEBI" id="CHEBI:16708"/>
        <dbReference type="ChEBI" id="CHEBI:43474"/>
        <dbReference type="ChEBI" id="CHEBI:57720"/>
        <dbReference type="EC" id="2.4.2.1"/>
    </reaction>
</comment>
<comment type="catalytic activity">
    <reaction evidence="1">
        <text>cytidine + phosphate = cytosine + alpha-D-ribose 1-phosphate</text>
        <dbReference type="Rhea" id="RHEA:52540"/>
        <dbReference type="ChEBI" id="CHEBI:16040"/>
        <dbReference type="ChEBI" id="CHEBI:17562"/>
        <dbReference type="ChEBI" id="CHEBI:43474"/>
        <dbReference type="ChEBI" id="CHEBI:57720"/>
        <dbReference type="EC" id="2.4.2.2"/>
    </reaction>
</comment>
<comment type="catalytic activity">
    <reaction evidence="1">
        <text>guanosine + phosphate = alpha-D-ribose 1-phosphate + guanine</text>
        <dbReference type="Rhea" id="RHEA:13233"/>
        <dbReference type="ChEBI" id="CHEBI:16235"/>
        <dbReference type="ChEBI" id="CHEBI:16750"/>
        <dbReference type="ChEBI" id="CHEBI:43474"/>
        <dbReference type="ChEBI" id="CHEBI:57720"/>
        <dbReference type="EC" id="2.4.2.1"/>
    </reaction>
</comment>
<comment type="catalytic activity">
    <reaction evidence="1">
        <text>inosine + phosphate = alpha-D-ribose 1-phosphate + hypoxanthine</text>
        <dbReference type="Rhea" id="RHEA:27646"/>
        <dbReference type="ChEBI" id="CHEBI:17368"/>
        <dbReference type="ChEBI" id="CHEBI:17596"/>
        <dbReference type="ChEBI" id="CHEBI:43474"/>
        <dbReference type="ChEBI" id="CHEBI:57720"/>
        <dbReference type="EC" id="2.4.2.1"/>
    </reaction>
</comment>
<comment type="catalytic activity">
    <reaction evidence="1">
        <text>thymidine + phosphate = 2-deoxy-alpha-D-ribose 1-phosphate + thymine</text>
        <dbReference type="Rhea" id="RHEA:16037"/>
        <dbReference type="ChEBI" id="CHEBI:17748"/>
        <dbReference type="ChEBI" id="CHEBI:17821"/>
        <dbReference type="ChEBI" id="CHEBI:43474"/>
        <dbReference type="ChEBI" id="CHEBI:57259"/>
        <dbReference type="EC" id="2.4.2.2"/>
    </reaction>
</comment>
<comment type="catalytic activity">
    <reaction evidence="1">
        <text>uridine + phosphate = alpha-D-ribose 1-phosphate + uracil</text>
        <dbReference type="Rhea" id="RHEA:24388"/>
        <dbReference type="ChEBI" id="CHEBI:16704"/>
        <dbReference type="ChEBI" id="CHEBI:17568"/>
        <dbReference type="ChEBI" id="CHEBI:43474"/>
        <dbReference type="ChEBI" id="CHEBI:57720"/>
        <dbReference type="EC" id="2.4.2.2"/>
    </reaction>
</comment>
<comment type="catalytic activity">
    <reaction evidence="1">
        <text>xanthosine + phosphate = alpha-D-ribose 1-phosphate + xanthine</text>
        <dbReference type="Rhea" id="RHEA:27638"/>
        <dbReference type="ChEBI" id="CHEBI:17712"/>
        <dbReference type="ChEBI" id="CHEBI:18107"/>
        <dbReference type="ChEBI" id="CHEBI:43474"/>
        <dbReference type="ChEBI" id="CHEBI:57720"/>
        <dbReference type="EC" id="2.4.2.1"/>
    </reaction>
</comment>
<comment type="similarity">
    <text evidence="1">Belongs to the nucleoside phosphorylase PpnP family.</text>
</comment>
<reference key="1">
    <citation type="submission" date="2009-07" db="EMBL/GenBank/DDBJ databases">
        <title>Complete sequence of Geobacter sp. M21.</title>
        <authorList>
            <consortium name="US DOE Joint Genome Institute"/>
            <person name="Lucas S."/>
            <person name="Copeland A."/>
            <person name="Lapidus A."/>
            <person name="Glavina del Rio T."/>
            <person name="Dalin E."/>
            <person name="Tice H."/>
            <person name="Bruce D."/>
            <person name="Goodwin L."/>
            <person name="Pitluck S."/>
            <person name="Saunders E."/>
            <person name="Brettin T."/>
            <person name="Detter J.C."/>
            <person name="Han C."/>
            <person name="Larimer F."/>
            <person name="Land M."/>
            <person name="Hauser L."/>
            <person name="Kyrpides N."/>
            <person name="Ovchinnikova G."/>
            <person name="Lovley D."/>
        </authorList>
    </citation>
    <scope>NUCLEOTIDE SEQUENCE [LARGE SCALE GENOMIC DNA]</scope>
    <source>
        <strain>M21</strain>
    </source>
</reference>
<evidence type="ECO:0000255" key="1">
    <source>
        <dbReference type="HAMAP-Rule" id="MF_01537"/>
    </source>
</evidence>